<keyword id="KW-0028">Amino-acid biosynthesis</keyword>
<keyword id="KW-0963">Cytoplasm</keyword>
<keyword id="KW-0368">Histidine biosynthesis</keyword>
<keyword id="KW-0456">Lyase</keyword>
<accession>B1ZAD6</accession>
<proteinExistence type="inferred from homology"/>
<feature type="chain" id="PRO_1000190580" description="Imidazole glycerol phosphate synthase subunit HisF">
    <location>
        <begin position="1"/>
        <end position="258"/>
    </location>
</feature>
<feature type="active site" evidence="1">
    <location>
        <position position="11"/>
    </location>
</feature>
<feature type="active site" evidence="1">
    <location>
        <position position="130"/>
    </location>
</feature>
<dbReference type="EC" id="4.3.2.10" evidence="1"/>
<dbReference type="EMBL" id="CP001029">
    <property type="protein sequence ID" value="ACB80644.1"/>
    <property type="molecule type" value="Genomic_DNA"/>
</dbReference>
<dbReference type="RefSeq" id="WP_012454374.1">
    <property type="nucleotide sequence ID" value="NC_010725.1"/>
</dbReference>
<dbReference type="SMR" id="B1ZAD6"/>
<dbReference type="STRING" id="441620.Mpop_2483"/>
<dbReference type="KEGG" id="mpo:Mpop_2483"/>
<dbReference type="eggNOG" id="COG0107">
    <property type="taxonomic scope" value="Bacteria"/>
</dbReference>
<dbReference type="HOGENOM" id="CLU_048577_4_0_5"/>
<dbReference type="OrthoDB" id="9781903at2"/>
<dbReference type="UniPathway" id="UPA00031">
    <property type="reaction ID" value="UER00010"/>
</dbReference>
<dbReference type="Proteomes" id="UP000007136">
    <property type="component" value="Chromosome"/>
</dbReference>
<dbReference type="GO" id="GO:0005737">
    <property type="term" value="C:cytoplasm"/>
    <property type="evidence" value="ECO:0007669"/>
    <property type="project" value="UniProtKB-SubCell"/>
</dbReference>
<dbReference type="GO" id="GO:0000107">
    <property type="term" value="F:imidazoleglycerol-phosphate synthase activity"/>
    <property type="evidence" value="ECO:0007669"/>
    <property type="project" value="UniProtKB-UniRule"/>
</dbReference>
<dbReference type="GO" id="GO:0016829">
    <property type="term" value="F:lyase activity"/>
    <property type="evidence" value="ECO:0007669"/>
    <property type="project" value="UniProtKB-KW"/>
</dbReference>
<dbReference type="GO" id="GO:0000105">
    <property type="term" value="P:L-histidine biosynthetic process"/>
    <property type="evidence" value="ECO:0007669"/>
    <property type="project" value="UniProtKB-UniRule"/>
</dbReference>
<dbReference type="CDD" id="cd04731">
    <property type="entry name" value="HisF"/>
    <property type="match status" value="1"/>
</dbReference>
<dbReference type="FunFam" id="3.20.20.70:FF:000006">
    <property type="entry name" value="Imidazole glycerol phosphate synthase subunit HisF"/>
    <property type="match status" value="1"/>
</dbReference>
<dbReference type="Gene3D" id="3.20.20.70">
    <property type="entry name" value="Aldolase class I"/>
    <property type="match status" value="1"/>
</dbReference>
<dbReference type="HAMAP" id="MF_01013">
    <property type="entry name" value="HisF"/>
    <property type="match status" value="1"/>
</dbReference>
<dbReference type="InterPro" id="IPR013785">
    <property type="entry name" value="Aldolase_TIM"/>
</dbReference>
<dbReference type="InterPro" id="IPR006062">
    <property type="entry name" value="His_biosynth"/>
</dbReference>
<dbReference type="InterPro" id="IPR004651">
    <property type="entry name" value="HisF"/>
</dbReference>
<dbReference type="InterPro" id="IPR050064">
    <property type="entry name" value="IGPS_HisA/HisF"/>
</dbReference>
<dbReference type="InterPro" id="IPR011060">
    <property type="entry name" value="RibuloseP-bd_barrel"/>
</dbReference>
<dbReference type="NCBIfam" id="TIGR00735">
    <property type="entry name" value="hisF"/>
    <property type="match status" value="1"/>
</dbReference>
<dbReference type="PANTHER" id="PTHR21235:SF2">
    <property type="entry name" value="IMIDAZOLE GLYCEROL PHOSPHATE SYNTHASE HISHF"/>
    <property type="match status" value="1"/>
</dbReference>
<dbReference type="PANTHER" id="PTHR21235">
    <property type="entry name" value="IMIDAZOLE GLYCEROL PHOSPHATE SYNTHASE SUBUNIT HISF/H IGP SYNTHASE SUBUNIT HISF/H"/>
    <property type="match status" value="1"/>
</dbReference>
<dbReference type="Pfam" id="PF00977">
    <property type="entry name" value="His_biosynth"/>
    <property type="match status" value="1"/>
</dbReference>
<dbReference type="SUPFAM" id="SSF51366">
    <property type="entry name" value="Ribulose-phoshate binding barrel"/>
    <property type="match status" value="1"/>
</dbReference>
<sequence length="258" mass="26840">MLKTRIIPCLDVKDGRVVKGVQFLELRDAGDPVESAKAYDAAGADELCFLDITASHEDRGTLLDVVSRTAEACFMPLTVGGGVRTVSDVRTLLLAGADKVGINTAAVKNPDFVAEAAEKFGDQCIVVAIDAKRVSGPHEAARWEIFTHGGRNPTGLDAVEFARKVSERGAGELLVTSMDKDGTRSGYDLALTRAIADAVKVPVIASGGVGGLDDLVAGVRDGGASAVLAASIFHFGQHTVAEAKSHMAAAGLAMRLDP</sequence>
<organism>
    <name type="scientific">Methylorubrum populi (strain ATCC BAA-705 / NCIMB 13946 / BJ001)</name>
    <name type="common">Methylobacterium populi</name>
    <dbReference type="NCBI Taxonomy" id="441620"/>
    <lineage>
        <taxon>Bacteria</taxon>
        <taxon>Pseudomonadati</taxon>
        <taxon>Pseudomonadota</taxon>
        <taxon>Alphaproteobacteria</taxon>
        <taxon>Hyphomicrobiales</taxon>
        <taxon>Methylobacteriaceae</taxon>
        <taxon>Methylorubrum</taxon>
    </lineage>
</organism>
<reference key="1">
    <citation type="submission" date="2008-04" db="EMBL/GenBank/DDBJ databases">
        <title>Complete sequence of chromosome of Methylobacterium populi BJ001.</title>
        <authorList>
            <consortium name="US DOE Joint Genome Institute"/>
            <person name="Copeland A."/>
            <person name="Lucas S."/>
            <person name="Lapidus A."/>
            <person name="Glavina del Rio T."/>
            <person name="Dalin E."/>
            <person name="Tice H."/>
            <person name="Bruce D."/>
            <person name="Goodwin L."/>
            <person name="Pitluck S."/>
            <person name="Chertkov O."/>
            <person name="Brettin T."/>
            <person name="Detter J.C."/>
            <person name="Han C."/>
            <person name="Kuske C.R."/>
            <person name="Schmutz J."/>
            <person name="Larimer F."/>
            <person name="Land M."/>
            <person name="Hauser L."/>
            <person name="Kyrpides N."/>
            <person name="Mikhailova N."/>
            <person name="Marx C."/>
            <person name="Richardson P."/>
        </authorList>
    </citation>
    <scope>NUCLEOTIDE SEQUENCE [LARGE SCALE GENOMIC DNA]</scope>
    <source>
        <strain>ATCC BAA-705 / NCIMB 13946 / BJ001</strain>
    </source>
</reference>
<gene>
    <name evidence="1" type="primary">hisF</name>
    <name type="ordered locus">Mpop_2483</name>
</gene>
<name>HIS6_METPB</name>
<protein>
    <recommendedName>
        <fullName evidence="1">Imidazole glycerol phosphate synthase subunit HisF</fullName>
        <ecNumber evidence="1">4.3.2.10</ecNumber>
    </recommendedName>
    <alternativeName>
        <fullName evidence="1">IGP synthase cyclase subunit</fullName>
    </alternativeName>
    <alternativeName>
        <fullName evidence="1">IGP synthase subunit HisF</fullName>
    </alternativeName>
    <alternativeName>
        <fullName evidence="1">ImGP synthase subunit HisF</fullName>
        <shortName evidence="1">IGPS subunit HisF</shortName>
    </alternativeName>
</protein>
<comment type="function">
    <text evidence="1">IGPS catalyzes the conversion of PRFAR and glutamine to IGP, AICAR and glutamate. The HisF subunit catalyzes the cyclization activity that produces IGP and AICAR from PRFAR using the ammonia provided by the HisH subunit.</text>
</comment>
<comment type="catalytic activity">
    <reaction evidence="1">
        <text>5-[(5-phospho-1-deoxy-D-ribulos-1-ylimino)methylamino]-1-(5-phospho-beta-D-ribosyl)imidazole-4-carboxamide + L-glutamine = D-erythro-1-(imidazol-4-yl)glycerol 3-phosphate + 5-amino-1-(5-phospho-beta-D-ribosyl)imidazole-4-carboxamide + L-glutamate + H(+)</text>
        <dbReference type="Rhea" id="RHEA:24793"/>
        <dbReference type="ChEBI" id="CHEBI:15378"/>
        <dbReference type="ChEBI" id="CHEBI:29985"/>
        <dbReference type="ChEBI" id="CHEBI:58278"/>
        <dbReference type="ChEBI" id="CHEBI:58359"/>
        <dbReference type="ChEBI" id="CHEBI:58475"/>
        <dbReference type="ChEBI" id="CHEBI:58525"/>
        <dbReference type="EC" id="4.3.2.10"/>
    </reaction>
</comment>
<comment type="pathway">
    <text evidence="1">Amino-acid biosynthesis; L-histidine biosynthesis; L-histidine from 5-phospho-alpha-D-ribose 1-diphosphate: step 5/9.</text>
</comment>
<comment type="subunit">
    <text evidence="1">Heterodimer of HisH and HisF.</text>
</comment>
<comment type="subcellular location">
    <subcellularLocation>
        <location evidence="1">Cytoplasm</location>
    </subcellularLocation>
</comment>
<comment type="similarity">
    <text evidence="1">Belongs to the HisA/HisF family.</text>
</comment>
<evidence type="ECO:0000255" key="1">
    <source>
        <dbReference type="HAMAP-Rule" id="MF_01013"/>
    </source>
</evidence>